<feature type="chain" id="PRO_0000179371" description="Trigger factor">
    <location>
        <begin position="1"/>
        <end position="443"/>
    </location>
</feature>
<feature type="domain" description="PPIase FKBP-type" evidence="1">
    <location>
        <begin position="161"/>
        <end position="246"/>
    </location>
</feature>
<name>TIG_LEGPL</name>
<proteinExistence type="inferred from homology"/>
<evidence type="ECO:0000255" key="1">
    <source>
        <dbReference type="HAMAP-Rule" id="MF_00303"/>
    </source>
</evidence>
<protein>
    <recommendedName>
        <fullName evidence="1">Trigger factor</fullName>
        <shortName evidence="1">TF</shortName>
        <ecNumber evidence="1">5.2.1.8</ecNumber>
    </recommendedName>
    <alternativeName>
        <fullName evidence="1">PPIase</fullName>
    </alternativeName>
</protein>
<reference key="1">
    <citation type="journal article" date="2004" name="Nat. Genet.">
        <title>Evidence in the Legionella pneumophila genome for exploitation of host cell functions and high genome plasticity.</title>
        <authorList>
            <person name="Cazalet C."/>
            <person name="Rusniok C."/>
            <person name="Brueggemann H."/>
            <person name="Zidane N."/>
            <person name="Magnier A."/>
            <person name="Ma L."/>
            <person name="Tichit M."/>
            <person name="Jarraud S."/>
            <person name="Bouchier C."/>
            <person name="Vandenesch F."/>
            <person name="Kunst F."/>
            <person name="Etienne J."/>
            <person name="Glaser P."/>
            <person name="Buchrieser C."/>
        </authorList>
    </citation>
    <scope>NUCLEOTIDE SEQUENCE [LARGE SCALE GENOMIC DNA]</scope>
    <source>
        <strain>Lens</strain>
    </source>
</reference>
<dbReference type="EC" id="5.2.1.8" evidence="1"/>
<dbReference type="EMBL" id="CR628337">
    <property type="protein sequence ID" value="CAH16065.1"/>
    <property type="molecule type" value="Genomic_DNA"/>
</dbReference>
<dbReference type="RefSeq" id="WP_011215827.1">
    <property type="nucleotide sequence ID" value="NC_006369.1"/>
</dbReference>
<dbReference type="SMR" id="Q5WVI9"/>
<dbReference type="KEGG" id="lpf:lpl1826"/>
<dbReference type="LegioList" id="lpl1826"/>
<dbReference type="HOGENOM" id="CLU_033058_2_0_6"/>
<dbReference type="Proteomes" id="UP000002517">
    <property type="component" value="Chromosome"/>
</dbReference>
<dbReference type="GO" id="GO:0005737">
    <property type="term" value="C:cytoplasm"/>
    <property type="evidence" value="ECO:0007669"/>
    <property type="project" value="UniProtKB-SubCell"/>
</dbReference>
<dbReference type="GO" id="GO:0003755">
    <property type="term" value="F:peptidyl-prolyl cis-trans isomerase activity"/>
    <property type="evidence" value="ECO:0007669"/>
    <property type="project" value="UniProtKB-UniRule"/>
</dbReference>
<dbReference type="GO" id="GO:0044183">
    <property type="term" value="F:protein folding chaperone"/>
    <property type="evidence" value="ECO:0007669"/>
    <property type="project" value="TreeGrafter"/>
</dbReference>
<dbReference type="GO" id="GO:0043022">
    <property type="term" value="F:ribosome binding"/>
    <property type="evidence" value="ECO:0007669"/>
    <property type="project" value="TreeGrafter"/>
</dbReference>
<dbReference type="GO" id="GO:0051083">
    <property type="term" value="P:'de novo' cotranslational protein folding"/>
    <property type="evidence" value="ECO:0007669"/>
    <property type="project" value="TreeGrafter"/>
</dbReference>
<dbReference type="GO" id="GO:0051301">
    <property type="term" value="P:cell division"/>
    <property type="evidence" value="ECO:0007669"/>
    <property type="project" value="UniProtKB-KW"/>
</dbReference>
<dbReference type="GO" id="GO:0061077">
    <property type="term" value="P:chaperone-mediated protein folding"/>
    <property type="evidence" value="ECO:0007669"/>
    <property type="project" value="TreeGrafter"/>
</dbReference>
<dbReference type="GO" id="GO:0015031">
    <property type="term" value="P:protein transport"/>
    <property type="evidence" value="ECO:0007669"/>
    <property type="project" value="UniProtKB-UniRule"/>
</dbReference>
<dbReference type="GO" id="GO:0043335">
    <property type="term" value="P:protein unfolding"/>
    <property type="evidence" value="ECO:0007669"/>
    <property type="project" value="TreeGrafter"/>
</dbReference>
<dbReference type="FunFam" id="3.10.50.40:FF:000001">
    <property type="entry name" value="Trigger factor"/>
    <property type="match status" value="1"/>
</dbReference>
<dbReference type="Gene3D" id="3.10.50.40">
    <property type="match status" value="1"/>
</dbReference>
<dbReference type="Gene3D" id="3.30.70.1050">
    <property type="entry name" value="Trigger factor ribosome-binding domain"/>
    <property type="match status" value="1"/>
</dbReference>
<dbReference type="Gene3D" id="1.10.3120.10">
    <property type="entry name" value="Trigger factor, C-terminal domain"/>
    <property type="match status" value="1"/>
</dbReference>
<dbReference type="HAMAP" id="MF_00303">
    <property type="entry name" value="Trigger_factor_Tig"/>
    <property type="match status" value="1"/>
</dbReference>
<dbReference type="InterPro" id="IPR046357">
    <property type="entry name" value="PPIase_dom_sf"/>
</dbReference>
<dbReference type="InterPro" id="IPR001179">
    <property type="entry name" value="PPIase_FKBP_dom"/>
</dbReference>
<dbReference type="InterPro" id="IPR005215">
    <property type="entry name" value="Trig_fac"/>
</dbReference>
<dbReference type="InterPro" id="IPR008880">
    <property type="entry name" value="Trigger_fac_C"/>
</dbReference>
<dbReference type="InterPro" id="IPR037041">
    <property type="entry name" value="Trigger_fac_C_sf"/>
</dbReference>
<dbReference type="InterPro" id="IPR008881">
    <property type="entry name" value="Trigger_fac_ribosome-bd_bac"/>
</dbReference>
<dbReference type="InterPro" id="IPR036611">
    <property type="entry name" value="Trigger_fac_ribosome-bd_sf"/>
</dbReference>
<dbReference type="InterPro" id="IPR027304">
    <property type="entry name" value="Trigger_fact/SurA_dom_sf"/>
</dbReference>
<dbReference type="NCBIfam" id="TIGR00115">
    <property type="entry name" value="tig"/>
    <property type="match status" value="1"/>
</dbReference>
<dbReference type="PANTHER" id="PTHR30560">
    <property type="entry name" value="TRIGGER FACTOR CHAPERONE AND PEPTIDYL-PROLYL CIS/TRANS ISOMERASE"/>
    <property type="match status" value="1"/>
</dbReference>
<dbReference type="PANTHER" id="PTHR30560:SF3">
    <property type="entry name" value="TRIGGER FACTOR-LIKE PROTEIN TIG, CHLOROPLASTIC"/>
    <property type="match status" value="1"/>
</dbReference>
<dbReference type="Pfam" id="PF00254">
    <property type="entry name" value="FKBP_C"/>
    <property type="match status" value="1"/>
</dbReference>
<dbReference type="Pfam" id="PF05698">
    <property type="entry name" value="Trigger_C"/>
    <property type="match status" value="1"/>
</dbReference>
<dbReference type="Pfam" id="PF05697">
    <property type="entry name" value="Trigger_N"/>
    <property type="match status" value="1"/>
</dbReference>
<dbReference type="PIRSF" id="PIRSF003095">
    <property type="entry name" value="Trigger_factor"/>
    <property type="match status" value="1"/>
</dbReference>
<dbReference type="SUPFAM" id="SSF54534">
    <property type="entry name" value="FKBP-like"/>
    <property type="match status" value="1"/>
</dbReference>
<dbReference type="SUPFAM" id="SSF109998">
    <property type="entry name" value="Triger factor/SurA peptide-binding domain-like"/>
    <property type="match status" value="1"/>
</dbReference>
<dbReference type="SUPFAM" id="SSF102735">
    <property type="entry name" value="Trigger factor ribosome-binding domain"/>
    <property type="match status" value="1"/>
</dbReference>
<dbReference type="PROSITE" id="PS50059">
    <property type="entry name" value="FKBP_PPIASE"/>
    <property type="match status" value="1"/>
</dbReference>
<comment type="function">
    <text evidence="1">Involved in protein export. Acts as a chaperone by maintaining the newly synthesized protein in an open conformation. Functions as a peptidyl-prolyl cis-trans isomerase.</text>
</comment>
<comment type="catalytic activity">
    <reaction evidence="1">
        <text>[protein]-peptidylproline (omega=180) = [protein]-peptidylproline (omega=0)</text>
        <dbReference type="Rhea" id="RHEA:16237"/>
        <dbReference type="Rhea" id="RHEA-COMP:10747"/>
        <dbReference type="Rhea" id="RHEA-COMP:10748"/>
        <dbReference type="ChEBI" id="CHEBI:83833"/>
        <dbReference type="ChEBI" id="CHEBI:83834"/>
        <dbReference type="EC" id="5.2.1.8"/>
    </reaction>
</comment>
<comment type="subcellular location">
    <subcellularLocation>
        <location>Cytoplasm</location>
    </subcellularLocation>
    <text evidence="1">About half TF is bound to the ribosome near the polypeptide exit tunnel while the other half is free in the cytoplasm.</text>
</comment>
<comment type="domain">
    <text evidence="1">Consists of 3 domains; the N-terminus binds the ribosome, the middle domain has PPIase activity, while the C-terminus has intrinsic chaperone activity on its own.</text>
</comment>
<comment type="similarity">
    <text evidence="1">Belongs to the FKBP-type PPIase family. Tig subfamily.</text>
</comment>
<organism>
    <name type="scientific">Legionella pneumophila (strain Lens)</name>
    <dbReference type="NCBI Taxonomy" id="297245"/>
    <lineage>
        <taxon>Bacteria</taxon>
        <taxon>Pseudomonadati</taxon>
        <taxon>Pseudomonadota</taxon>
        <taxon>Gammaproteobacteria</taxon>
        <taxon>Legionellales</taxon>
        <taxon>Legionellaceae</taxon>
        <taxon>Legionella</taxon>
    </lineage>
</organism>
<sequence length="443" mass="50715">MQVSVETLEGLERKVTVSVPTEKVEEEVSSRLRNLARKVKIDGFRPGKVPFNVVKSRFSDSVREEVAREMVQSTLYEALQKNELVPAGYPHVEPLEIEPGKDFKYTAVFEVMPVFEVVELNQAPVELIQSEVSDKDVDNMIEKLREQNKEWHEVTHAVKKGDKVVIDFQGFLDDKPFQGGSAEGYELVIGSGSMIPGFEDGIIGGKIDKPLDIKVSFPEDYGHKDLAGKEATFKITIKKIMEGKLPALDEAFAEKFNIKEGGIESLKKDIRENMARELERRVNMMNREKLFDSLMSVNHVELPIALIDKEIEHLKHDMYHRLFGHEHKDDEKIPDFPRELFEEQAKRRVHLGLLFAEYVKKHEIVADNDKVNAMIDKFASAYESPDELRAWYQSSKEHMAEVEALVMEDMVADKIAEDAKLKYKNMDYDSVMNPKKGTEKKGE</sequence>
<keyword id="KW-0131">Cell cycle</keyword>
<keyword id="KW-0132">Cell division</keyword>
<keyword id="KW-0143">Chaperone</keyword>
<keyword id="KW-0963">Cytoplasm</keyword>
<keyword id="KW-0413">Isomerase</keyword>
<keyword id="KW-0697">Rotamase</keyword>
<accession>Q5WVI9</accession>
<gene>
    <name evidence="1" type="primary">tig</name>
    <name type="ordered locus">lpl1826</name>
</gene>